<dbReference type="EC" id="6.3.5.3" evidence="1"/>
<dbReference type="EMBL" id="CP000115">
    <property type="protein sequence ID" value="ABA04569.1"/>
    <property type="molecule type" value="Genomic_DNA"/>
</dbReference>
<dbReference type="RefSeq" id="WP_011314589.1">
    <property type="nucleotide sequence ID" value="NC_007406.1"/>
</dbReference>
<dbReference type="SMR" id="Q3ST22"/>
<dbReference type="STRING" id="323098.Nwi_1308"/>
<dbReference type="KEGG" id="nwi:Nwi_1308"/>
<dbReference type="eggNOG" id="COG0046">
    <property type="taxonomic scope" value="Bacteria"/>
</dbReference>
<dbReference type="HOGENOM" id="CLU_003100_0_1_5"/>
<dbReference type="OrthoDB" id="9804441at2"/>
<dbReference type="UniPathway" id="UPA00074">
    <property type="reaction ID" value="UER00128"/>
</dbReference>
<dbReference type="Proteomes" id="UP000002531">
    <property type="component" value="Chromosome"/>
</dbReference>
<dbReference type="GO" id="GO:0005737">
    <property type="term" value="C:cytoplasm"/>
    <property type="evidence" value="ECO:0007669"/>
    <property type="project" value="UniProtKB-SubCell"/>
</dbReference>
<dbReference type="GO" id="GO:0005524">
    <property type="term" value="F:ATP binding"/>
    <property type="evidence" value="ECO:0007669"/>
    <property type="project" value="UniProtKB-UniRule"/>
</dbReference>
<dbReference type="GO" id="GO:0000287">
    <property type="term" value="F:magnesium ion binding"/>
    <property type="evidence" value="ECO:0007669"/>
    <property type="project" value="UniProtKB-UniRule"/>
</dbReference>
<dbReference type="GO" id="GO:0004642">
    <property type="term" value="F:phosphoribosylformylglycinamidine synthase activity"/>
    <property type="evidence" value="ECO:0007669"/>
    <property type="project" value="UniProtKB-UniRule"/>
</dbReference>
<dbReference type="GO" id="GO:0006189">
    <property type="term" value="P:'de novo' IMP biosynthetic process"/>
    <property type="evidence" value="ECO:0007669"/>
    <property type="project" value="UniProtKB-UniRule"/>
</dbReference>
<dbReference type="CDD" id="cd02203">
    <property type="entry name" value="PurL_repeat1"/>
    <property type="match status" value="1"/>
</dbReference>
<dbReference type="CDD" id="cd02204">
    <property type="entry name" value="PurL_repeat2"/>
    <property type="match status" value="1"/>
</dbReference>
<dbReference type="FunFam" id="3.30.1330.10:FF:000004">
    <property type="entry name" value="Phosphoribosylformylglycinamidine synthase subunit PurL"/>
    <property type="match status" value="1"/>
</dbReference>
<dbReference type="Gene3D" id="3.90.650.10">
    <property type="entry name" value="PurM-like C-terminal domain"/>
    <property type="match status" value="2"/>
</dbReference>
<dbReference type="Gene3D" id="3.30.1330.10">
    <property type="entry name" value="PurM-like, N-terminal domain"/>
    <property type="match status" value="2"/>
</dbReference>
<dbReference type="HAMAP" id="MF_00420">
    <property type="entry name" value="PurL_2"/>
    <property type="match status" value="1"/>
</dbReference>
<dbReference type="InterPro" id="IPR010074">
    <property type="entry name" value="PRibForGlyAmidine_synth_PurL"/>
</dbReference>
<dbReference type="InterPro" id="IPR041609">
    <property type="entry name" value="PurL_linker"/>
</dbReference>
<dbReference type="InterPro" id="IPR010918">
    <property type="entry name" value="PurM-like_C_dom"/>
</dbReference>
<dbReference type="InterPro" id="IPR036676">
    <property type="entry name" value="PurM-like_C_sf"/>
</dbReference>
<dbReference type="InterPro" id="IPR016188">
    <property type="entry name" value="PurM-like_N"/>
</dbReference>
<dbReference type="InterPro" id="IPR036921">
    <property type="entry name" value="PurM-like_N_sf"/>
</dbReference>
<dbReference type="NCBIfam" id="TIGR01736">
    <property type="entry name" value="FGAM_synth_II"/>
    <property type="match status" value="1"/>
</dbReference>
<dbReference type="NCBIfam" id="NF002290">
    <property type="entry name" value="PRK01213.1"/>
    <property type="match status" value="1"/>
</dbReference>
<dbReference type="PANTHER" id="PTHR43555">
    <property type="entry name" value="PHOSPHORIBOSYLFORMYLGLYCINAMIDINE SYNTHASE SUBUNIT PURL"/>
    <property type="match status" value="1"/>
</dbReference>
<dbReference type="PANTHER" id="PTHR43555:SF1">
    <property type="entry name" value="PHOSPHORIBOSYLFORMYLGLYCINAMIDINE SYNTHASE SUBUNIT PURL"/>
    <property type="match status" value="1"/>
</dbReference>
<dbReference type="Pfam" id="PF00586">
    <property type="entry name" value="AIRS"/>
    <property type="match status" value="2"/>
</dbReference>
<dbReference type="Pfam" id="PF02769">
    <property type="entry name" value="AIRS_C"/>
    <property type="match status" value="2"/>
</dbReference>
<dbReference type="Pfam" id="PF18072">
    <property type="entry name" value="FGAR-AT_linker"/>
    <property type="match status" value="1"/>
</dbReference>
<dbReference type="PIRSF" id="PIRSF001587">
    <property type="entry name" value="FGAM_synthase_II"/>
    <property type="match status" value="1"/>
</dbReference>
<dbReference type="SUPFAM" id="SSF56042">
    <property type="entry name" value="PurM C-terminal domain-like"/>
    <property type="match status" value="2"/>
</dbReference>
<dbReference type="SUPFAM" id="SSF55326">
    <property type="entry name" value="PurM N-terminal domain-like"/>
    <property type="match status" value="2"/>
</dbReference>
<name>PURL_NITWN</name>
<gene>
    <name evidence="1" type="primary">purL</name>
    <name type="ordered locus">Nwi_1308</name>
</gene>
<keyword id="KW-0067">ATP-binding</keyword>
<keyword id="KW-0963">Cytoplasm</keyword>
<keyword id="KW-0436">Ligase</keyword>
<keyword id="KW-0460">Magnesium</keyword>
<keyword id="KW-0479">Metal-binding</keyword>
<keyword id="KW-0547">Nucleotide-binding</keyword>
<keyword id="KW-0658">Purine biosynthesis</keyword>
<keyword id="KW-1185">Reference proteome</keyword>
<sequence>MIVRNEPPITPELVASHGLKPDEYERILKLLGRTPTFTELGIFSAMWNEHCSYKSSRIHLRGLPTKAPWVIQGPGENAGVIDIGDGQAVVFKMESHNHPSYIEPYQGATTGVGGILRDVFTMGARPIACLNALSFGDPSHPKTRHLVSGVVAGVGGYGNSFGVPTVGGQVRFHTRYDGNILVNAMAVGLADADRIFYAAASGVNMPIVYLGSKTGRDGIHGATMASAEFDDDSEEKRPTVQVGDPFAEKLLLEACLEIMAKGCVVAIQDMGAAGLTCSAVEMGAKGDLGVDLDLDSVPTRETGMSAYEMMLSESQERMLMVLKPEKEKEAEAIFRKWGLDFAIVGSTTPGRRFVVRHGGDVMADLPIKELESEAPLYDRPHVPSPQLPVIQARDVAPSLTTADALEKLLAMPELCSKRWVWEQYDHVIGGNTVQRPGGDAAVVRVEDGPKGLALTVDVTPRYCEADPFEGGKQAVAEAWRNITAVGGRPLAITDNLNFGNPERPENMGQFVGCLKGIAAACTALDFPVVSGNVSLYNETNGRGILPTPTIGGVGLLDDFTKSASLAFKAEGHPILLIGDTQGWLGQSVYLRDICRREEGAPPPVDLAAEKRNGDVVRGMIHAGTATAVHDVSDGGLLVALAEMAMADGIGAALDAAPAAIVPYAWWFGEDQARYIVTVHERDLLSVFTKLKAVNVPCIQIGLTGGHEIAIAGERAVDLKVLRQGFESWLPDYMAGKP</sequence>
<accession>Q3ST22</accession>
<feature type="chain" id="PRO_0000236656" description="Phosphoribosylformylglycinamidine synthase subunit PurL">
    <location>
        <begin position="1"/>
        <end position="737"/>
    </location>
</feature>
<feature type="active site" evidence="1">
    <location>
        <position position="50"/>
    </location>
</feature>
<feature type="active site" description="Proton acceptor" evidence="1">
    <location>
        <position position="96"/>
    </location>
</feature>
<feature type="binding site" evidence="1">
    <location>
        <position position="53"/>
    </location>
    <ligand>
        <name>ATP</name>
        <dbReference type="ChEBI" id="CHEBI:30616"/>
    </ligand>
</feature>
<feature type="binding site" evidence="1">
    <location>
        <position position="92"/>
    </location>
    <ligand>
        <name>ATP</name>
        <dbReference type="ChEBI" id="CHEBI:30616"/>
    </ligand>
</feature>
<feature type="binding site" evidence="1">
    <location>
        <position position="94"/>
    </location>
    <ligand>
        <name>Mg(2+)</name>
        <dbReference type="ChEBI" id="CHEBI:18420"/>
        <label>1</label>
    </ligand>
</feature>
<feature type="binding site" evidence="1">
    <location>
        <begin position="95"/>
        <end position="98"/>
    </location>
    <ligand>
        <name>substrate</name>
    </ligand>
</feature>
<feature type="binding site" evidence="1">
    <location>
        <position position="117"/>
    </location>
    <ligand>
        <name>substrate</name>
    </ligand>
</feature>
<feature type="binding site" evidence="1">
    <location>
        <position position="118"/>
    </location>
    <ligand>
        <name>Mg(2+)</name>
        <dbReference type="ChEBI" id="CHEBI:18420"/>
        <label>2</label>
    </ligand>
</feature>
<feature type="binding site" evidence="1">
    <location>
        <position position="241"/>
    </location>
    <ligand>
        <name>substrate</name>
    </ligand>
</feature>
<feature type="binding site" evidence="1">
    <location>
        <position position="269"/>
    </location>
    <ligand>
        <name>Mg(2+)</name>
        <dbReference type="ChEBI" id="CHEBI:18420"/>
        <label>2</label>
    </ligand>
</feature>
<feature type="binding site" evidence="1">
    <location>
        <begin position="313"/>
        <end position="315"/>
    </location>
    <ligand>
        <name>substrate</name>
    </ligand>
</feature>
<feature type="binding site" evidence="1">
    <location>
        <position position="494"/>
    </location>
    <ligand>
        <name>ATP</name>
        <dbReference type="ChEBI" id="CHEBI:30616"/>
    </ligand>
</feature>
<feature type="binding site" evidence="1">
    <location>
        <position position="531"/>
    </location>
    <ligand>
        <name>ATP</name>
        <dbReference type="ChEBI" id="CHEBI:30616"/>
    </ligand>
</feature>
<feature type="binding site" evidence="1">
    <location>
        <position position="532"/>
    </location>
    <ligand>
        <name>Mg(2+)</name>
        <dbReference type="ChEBI" id="CHEBI:18420"/>
        <label>1</label>
    </ligand>
</feature>
<feature type="binding site" evidence="1">
    <location>
        <position position="534"/>
    </location>
    <ligand>
        <name>substrate</name>
    </ligand>
</feature>
<reference key="1">
    <citation type="journal article" date="2006" name="Appl. Environ. Microbiol.">
        <title>Genome sequence of the chemolithoautotrophic nitrite-oxidizing bacterium Nitrobacter winogradskyi Nb-255.</title>
        <authorList>
            <person name="Starkenburg S.R."/>
            <person name="Chain P.S.G."/>
            <person name="Sayavedra-Soto L.A."/>
            <person name="Hauser L."/>
            <person name="Land M.L."/>
            <person name="Larimer F.W."/>
            <person name="Malfatti S.A."/>
            <person name="Klotz M.G."/>
            <person name="Bottomley P.J."/>
            <person name="Arp D.J."/>
            <person name="Hickey W.J."/>
        </authorList>
    </citation>
    <scope>NUCLEOTIDE SEQUENCE [LARGE SCALE GENOMIC DNA]</scope>
    <source>
        <strain>ATCC 25391 / DSM 10237 / CIP 104748 / NCIMB 11846 / Nb-255</strain>
    </source>
</reference>
<protein>
    <recommendedName>
        <fullName evidence="1">Phosphoribosylformylglycinamidine synthase subunit PurL</fullName>
        <shortName evidence="1">FGAM synthase</shortName>
        <ecNumber evidence="1">6.3.5.3</ecNumber>
    </recommendedName>
    <alternativeName>
        <fullName evidence="1">Formylglycinamide ribonucleotide amidotransferase subunit II</fullName>
        <shortName evidence="1">FGAR amidotransferase II</shortName>
        <shortName evidence="1">FGAR-AT II</shortName>
    </alternativeName>
    <alternativeName>
        <fullName evidence="1">Glutamine amidotransferase PurL</fullName>
    </alternativeName>
    <alternativeName>
        <fullName evidence="1">Phosphoribosylformylglycinamidine synthase subunit II</fullName>
    </alternativeName>
</protein>
<comment type="function">
    <text evidence="1">Part of the phosphoribosylformylglycinamidine synthase complex involved in the purines biosynthetic pathway. Catalyzes the ATP-dependent conversion of formylglycinamide ribonucleotide (FGAR) and glutamine to yield formylglycinamidine ribonucleotide (FGAM) and glutamate. The FGAM synthase complex is composed of three subunits. PurQ produces an ammonia molecule by converting glutamine to glutamate. PurL transfers the ammonia molecule to FGAR to form FGAM in an ATP-dependent manner. PurS interacts with PurQ and PurL and is thought to assist in the transfer of the ammonia molecule from PurQ to PurL.</text>
</comment>
<comment type="catalytic activity">
    <reaction evidence="1">
        <text>N(2)-formyl-N(1)-(5-phospho-beta-D-ribosyl)glycinamide + L-glutamine + ATP + H2O = 2-formamido-N(1)-(5-O-phospho-beta-D-ribosyl)acetamidine + L-glutamate + ADP + phosphate + H(+)</text>
        <dbReference type="Rhea" id="RHEA:17129"/>
        <dbReference type="ChEBI" id="CHEBI:15377"/>
        <dbReference type="ChEBI" id="CHEBI:15378"/>
        <dbReference type="ChEBI" id="CHEBI:29985"/>
        <dbReference type="ChEBI" id="CHEBI:30616"/>
        <dbReference type="ChEBI" id="CHEBI:43474"/>
        <dbReference type="ChEBI" id="CHEBI:58359"/>
        <dbReference type="ChEBI" id="CHEBI:147286"/>
        <dbReference type="ChEBI" id="CHEBI:147287"/>
        <dbReference type="ChEBI" id="CHEBI:456216"/>
        <dbReference type="EC" id="6.3.5.3"/>
    </reaction>
</comment>
<comment type="pathway">
    <text evidence="1">Purine metabolism; IMP biosynthesis via de novo pathway; 5-amino-1-(5-phospho-D-ribosyl)imidazole from N(2)-formyl-N(1)-(5-phospho-D-ribosyl)glycinamide: step 1/2.</text>
</comment>
<comment type="subunit">
    <text evidence="1">Monomer. Part of the FGAM synthase complex composed of 1 PurL, 1 PurQ and 2 PurS subunits.</text>
</comment>
<comment type="subcellular location">
    <subcellularLocation>
        <location evidence="1">Cytoplasm</location>
    </subcellularLocation>
</comment>
<comment type="similarity">
    <text evidence="1">Belongs to the FGAMS family.</text>
</comment>
<evidence type="ECO:0000255" key="1">
    <source>
        <dbReference type="HAMAP-Rule" id="MF_00420"/>
    </source>
</evidence>
<organism>
    <name type="scientific">Nitrobacter winogradskyi (strain ATCC 25391 / DSM 10237 / CIP 104748 / NCIMB 11846 / Nb-255)</name>
    <dbReference type="NCBI Taxonomy" id="323098"/>
    <lineage>
        <taxon>Bacteria</taxon>
        <taxon>Pseudomonadati</taxon>
        <taxon>Pseudomonadota</taxon>
        <taxon>Alphaproteobacteria</taxon>
        <taxon>Hyphomicrobiales</taxon>
        <taxon>Nitrobacteraceae</taxon>
        <taxon>Nitrobacter</taxon>
    </lineage>
</organism>
<proteinExistence type="inferred from homology"/>